<feature type="initiator methionine" description="Removed" evidence="2">
    <location>
        <position position="1"/>
    </location>
</feature>
<feature type="chain" id="PRO_0000373945" description="Lys-63-specific deubiquitinase BRCC36">
    <location>
        <begin position="2"/>
        <end position="316"/>
    </location>
</feature>
<feature type="domain" description="MPN" evidence="4">
    <location>
        <begin position="12"/>
        <end position="179"/>
    </location>
</feature>
<feature type="short sequence motif" description="JAMM motif" evidence="4">
    <location>
        <begin position="122"/>
        <end position="135"/>
    </location>
</feature>
<feature type="binding site" evidence="4">
    <location>
        <position position="122"/>
    </location>
    <ligand>
        <name>Zn(2+)</name>
        <dbReference type="ChEBI" id="CHEBI:29105"/>
        <note>catalytic</note>
    </ligand>
</feature>
<feature type="binding site" evidence="4">
    <location>
        <position position="124"/>
    </location>
    <ligand>
        <name>Zn(2+)</name>
        <dbReference type="ChEBI" id="CHEBI:29105"/>
        <note>catalytic</note>
    </ligand>
</feature>
<feature type="binding site" evidence="4">
    <location>
        <position position="135"/>
    </location>
    <ligand>
        <name>Zn(2+)</name>
        <dbReference type="ChEBI" id="CHEBI:29105"/>
        <note>catalytic</note>
    </ligand>
</feature>
<feature type="modified residue" description="N-acetylalanine" evidence="2">
    <location>
        <position position="2"/>
    </location>
</feature>
<feature type="modified residue" description="Phosphoserine" evidence="2">
    <location>
        <position position="258"/>
    </location>
</feature>
<protein>
    <recommendedName>
        <fullName>Lys-63-specific deubiquitinase BRCC36</fullName>
        <ecNumber evidence="2">3.4.19.-</ecNumber>
    </recommendedName>
    <alternativeName>
        <fullName>BRCA1-A complex subunit BRCC36</fullName>
    </alternativeName>
    <alternativeName>
        <fullName>BRCA1/BRCA2-containing complex subunit 3</fullName>
    </alternativeName>
    <alternativeName>
        <fullName>BRCA1/BRCA2-containing complex subunit 36</fullName>
    </alternativeName>
    <alternativeName>
        <fullName>BRISC complex subunit BRCC36</fullName>
    </alternativeName>
</protein>
<gene>
    <name type="primary">BRCC3</name>
    <name type="synonym">BRCC36</name>
</gene>
<keyword id="KW-0007">Acetylation</keyword>
<keyword id="KW-0131">Cell cycle</keyword>
<keyword id="KW-0132">Cell division</keyword>
<keyword id="KW-0156">Chromatin regulator</keyword>
<keyword id="KW-0963">Cytoplasm</keyword>
<keyword id="KW-0206">Cytoskeleton</keyword>
<keyword id="KW-0227">DNA damage</keyword>
<keyword id="KW-0234">DNA repair</keyword>
<keyword id="KW-0378">Hydrolase</keyword>
<keyword id="KW-0479">Metal-binding</keyword>
<keyword id="KW-0482">Metalloprotease</keyword>
<keyword id="KW-0498">Mitosis</keyword>
<keyword id="KW-0539">Nucleus</keyword>
<keyword id="KW-0597">Phosphoprotein</keyword>
<keyword id="KW-0645">Protease</keyword>
<keyword id="KW-1185">Reference proteome</keyword>
<keyword id="KW-0833">Ubl conjugation pathway</keyword>
<keyword id="KW-0862">Zinc</keyword>
<comment type="function">
    <text evidence="2 3">Metalloprotease that specifically cleaves 'Lys-63'-linked polyubiquitin chains. Does not have activity toward 'Lys-48'-linked polyubiquitin chains. Component of the BRCA1-A complex, a complex that specifically recognizes 'Lys-63'-linked ubiquitinated histones H2A and H2AX at DNA lesions sites, leading to target the BRCA1-BARD1 heterodimer to sites of DNA damage at double-strand breaks (DSBs). In the BRCA1-A complex, it specifically removes 'Lys-63'-linked ubiquitin on histones H2A and H2AX, antagonizing the RNF8-dependent ubiquitination at double-strand breaks (DSBs). Catalytic subunit of the BRISC complex, a multiprotein complex that specifically cleaves 'Lys-63'-linked ubiquitin in various substrates. Mediates the specific 'Lys-63'-specific deubiquitination associated with the COP9 signalosome complex (CSN), via the interaction of the BRISC complex with the CSN complex. The BRISC complex is required for normal mitotic spindle assembly and microtubule attachment to kinetochores via its role in deubiquitinating NUMA1. Plays a role in interferon signaling via its role in the deubiquitination of the interferon receptor IFNAR1; deubiquitination increases IFNAR1 activity by enhancing its stability and cell surface expression (By similarity). Acts as a regulator of the NLRP3 inflammasome by mediating deubiquitination of NLRP3, leading to NLRP3 inflammasome assembly (By similarity). Down-regulates the response to bacterial lipopolysaccharide (LPS) via its role in IFNAR1 deubiquitination (By similarity). Deubiquitinates HDAC1 and PWWP2B leading to their stabilization (By similarity).</text>
</comment>
<comment type="cofactor">
    <cofactor evidence="1 2">
        <name>Zn(2+)</name>
        <dbReference type="ChEBI" id="CHEBI:29105"/>
    </cofactor>
    <text evidence="1">Binds 1 zinc ion per subunit.</text>
</comment>
<comment type="subunit">
    <text evidence="2 3">Component of the ARISC complex, at least composed of UIMC1/RAP80, ABRAXAS1, BRCC3/BRCC36, BABAM2 and BABAM1/NBA1. Component of the BRCA1-A complex, at least composed of BRCA1, BARD1, UIMC1/RAP80, ABRAXAS1, BRCC3/BRCC36, BABAM2 and BABAM1/NBA1. In the BRCA1-A complex, interacts directly with ABRAXAS1 and BABAM2. Component of the BRISC complex, at least composed of ABRAXAS2, BRCC3/BRCC36, BABAM2 and BABAM1/NBA1. Identified in a complex with SHMT2 and the other subunits of the BRISC complex. In the BRISC complex, interacts directly with ABRAXAS2. Identified in a complex with ABRAXAS2 and NUMA1. The BRISC complex interacts with the CSN complex. Component of the BRCA1/BRCA2 containing complex (BRCC), which also contains BRCA1, BRCA2, BARD1, BABAM2 and RAD51. BRCC is a ubiquitin E3 ligase complex that enhances cellular survival following DNA damage. Interacts with BRCA1. Binds polyubiquitin (By similarity). Interacts with PWWP2B (By similarity). Interacts with HDAC1; this interaction is enhanced in the presence of PWWP2B (By similarity).</text>
</comment>
<comment type="subcellular location">
    <subcellularLocation>
        <location evidence="2">Nucleus</location>
    </subcellularLocation>
    <subcellularLocation>
        <location evidence="2">Cytoplasm</location>
    </subcellularLocation>
    <subcellularLocation>
        <location evidence="2">Cytoplasm</location>
        <location evidence="2">Cytoskeleton</location>
        <location evidence="2">Spindle pole</location>
    </subcellularLocation>
    <text evidence="2">Localizes at sites of DNA damage at double-strand breaks (DSBs). Interaction with ABRAXAS2 retains BRCC3 in the cytoplasm.</text>
</comment>
<comment type="similarity">
    <text evidence="5">Belongs to the peptidase M67A family. BRCC36 subfamily.</text>
</comment>
<accession>B0KWU8</accession>
<name>BRCC3_CALJA</name>
<organism>
    <name type="scientific">Callithrix jacchus</name>
    <name type="common">White-tufted-ear marmoset</name>
    <dbReference type="NCBI Taxonomy" id="9483"/>
    <lineage>
        <taxon>Eukaryota</taxon>
        <taxon>Metazoa</taxon>
        <taxon>Chordata</taxon>
        <taxon>Craniata</taxon>
        <taxon>Vertebrata</taxon>
        <taxon>Euteleostomi</taxon>
        <taxon>Mammalia</taxon>
        <taxon>Eutheria</taxon>
        <taxon>Euarchontoglires</taxon>
        <taxon>Primates</taxon>
        <taxon>Haplorrhini</taxon>
        <taxon>Platyrrhini</taxon>
        <taxon>Cebidae</taxon>
        <taxon>Callitrichinae</taxon>
        <taxon>Callithrix</taxon>
        <taxon>Callithrix</taxon>
    </lineage>
</organism>
<dbReference type="EC" id="3.4.19.-" evidence="2"/>
<dbReference type="EMBL" id="DP000587">
    <property type="protein sequence ID" value="ABZ10507.1"/>
    <property type="molecule type" value="Genomic_DNA"/>
</dbReference>
<dbReference type="SMR" id="B0KWU8"/>
<dbReference type="FunCoup" id="B0KWU8">
    <property type="interactions" value="2801"/>
</dbReference>
<dbReference type="STRING" id="9483.ENSCJAP00000075837"/>
<dbReference type="MEROPS" id="M67.004"/>
<dbReference type="eggNOG" id="KOG1555">
    <property type="taxonomic scope" value="Eukaryota"/>
</dbReference>
<dbReference type="InParanoid" id="B0KWU8"/>
<dbReference type="Proteomes" id="UP000008225">
    <property type="component" value="Chromosome X"/>
</dbReference>
<dbReference type="Bgee" id="ENSCJAG00000004308">
    <property type="expression patterns" value="Expressed in heart and 6 other cell types or tissues"/>
</dbReference>
<dbReference type="GO" id="GO:0070531">
    <property type="term" value="C:BRCA1-A complex"/>
    <property type="evidence" value="ECO:0000250"/>
    <property type="project" value="UniProtKB"/>
</dbReference>
<dbReference type="GO" id="GO:0070552">
    <property type="term" value="C:BRISC complex"/>
    <property type="evidence" value="ECO:0000250"/>
    <property type="project" value="UniProtKB"/>
</dbReference>
<dbReference type="GO" id="GO:0005737">
    <property type="term" value="C:cytoplasm"/>
    <property type="evidence" value="ECO:0007669"/>
    <property type="project" value="UniProtKB-SubCell"/>
</dbReference>
<dbReference type="GO" id="GO:0005634">
    <property type="term" value="C:nucleus"/>
    <property type="evidence" value="ECO:0000250"/>
    <property type="project" value="UniProtKB"/>
</dbReference>
<dbReference type="GO" id="GO:0000922">
    <property type="term" value="C:spindle pole"/>
    <property type="evidence" value="ECO:0007669"/>
    <property type="project" value="UniProtKB-SubCell"/>
</dbReference>
<dbReference type="GO" id="GO:0004843">
    <property type="term" value="F:cysteine-type deubiquitinase activity"/>
    <property type="evidence" value="ECO:0007669"/>
    <property type="project" value="InterPro"/>
</dbReference>
<dbReference type="GO" id="GO:0046872">
    <property type="term" value="F:metal ion binding"/>
    <property type="evidence" value="ECO:0007669"/>
    <property type="project" value="UniProtKB-KW"/>
</dbReference>
<dbReference type="GO" id="GO:0140492">
    <property type="term" value="F:metal-dependent deubiquitinase activity"/>
    <property type="evidence" value="ECO:0000250"/>
    <property type="project" value="UniProtKB"/>
</dbReference>
<dbReference type="GO" id="GO:0008237">
    <property type="term" value="F:metallopeptidase activity"/>
    <property type="evidence" value="ECO:0000250"/>
    <property type="project" value="UniProtKB"/>
</dbReference>
<dbReference type="GO" id="GO:0031593">
    <property type="term" value="F:polyubiquitin modification-dependent protein binding"/>
    <property type="evidence" value="ECO:0000250"/>
    <property type="project" value="UniProtKB"/>
</dbReference>
<dbReference type="GO" id="GO:0051301">
    <property type="term" value="P:cell division"/>
    <property type="evidence" value="ECO:0007669"/>
    <property type="project" value="UniProtKB-KW"/>
</dbReference>
<dbReference type="GO" id="GO:0006338">
    <property type="term" value="P:chromatin remodeling"/>
    <property type="evidence" value="ECO:0000250"/>
    <property type="project" value="UniProtKB"/>
</dbReference>
<dbReference type="GO" id="GO:0140861">
    <property type="term" value="P:DNA repair-dependent chromatin remodeling"/>
    <property type="evidence" value="ECO:0000250"/>
    <property type="project" value="UniProtKB"/>
</dbReference>
<dbReference type="GO" id="GO:0006302">
    <property type="term" value="P:double-strand break repair"/>
    <property type="evidence" value="ECO:0000250"/>
    <property type="project" value="UniProtKB"/>
</dbReference>
<dbReference type="GO" id="GO:0007095">
    <property type="term" value="P:mitotic G2 DNA damage checkpoint signaling"/>
    <property type="evidence" value="ECO:0000250"/>
    <property type="project" value="UniProtKB"/>
</dbReference>
<dbReference type="GO" id="GO:0045739">
    <property type="term" value="P:positive regulation of DNA repair"/>
    <property type="evidence" value="ECO:0000250"/>
    <property type="project" value="UniProtKB"/>
</dbReference>
<dbReference type="GO" id="GO:1900227">
    <property type="term" value="P:positive regulation of NLRP3 inflammasome complex assembly"/>
    <property type="evidence" value="ECO:0000250"/>
    <property type="project" value="UniProtKB"/>
</dbReference>
<dbReference type="GO" id="GO:0070536">
    <property type="term" value="P:protein K63-linked deubiquitination"/>
    <property type="evidence" value="ECO:0000250"/>
    <property type="project" value="UniProtKB"/>
</dbReference>
<dbReference type="GO" id="GO:0006508">
    <property type="term" value="P:proteolysis"/>
    <property type="evidence" value="ECO:0007669"/>
    <property type="project" value="UniProtKB-KW"/>
</dbReference>
<dbReference type="GO" id="GO:0010212">
    <property type="term" value="P:response to ionizing radiation"/>
    <property type="evidence" value="ECO:0000250"/>
    <property type="project" value="UniProtKB"/>
</dbReference>
<dbReference type="CDD" id="cd08068">
    <property type="entry name" value="MPN_BRCC36"/>
    <property type="match status" value="1"/>
</dbReference>
<dbReference type="FunFam" id="3.40.140.10:FF:000015">
    <property type="entry name" value="Lys-63-specific deubiquitinase BRCC36 isoform 3"/>
    <property type="match status" value="1"/>
</dbReference>
<dbReference type="Gene3D" id="3.40.140.10">
    <property type="entry name" value="Cytidine Deaminase, domain 2"/>
    <property type="match status" value="1"/>
</dbReference>
<dbReference type="InterPro" id="IPR040749">
    <property type="entry name" value="BRCC36_C"/>
</dbReference>
<dbReference type="InterPro" id="IPR000555">
    <property type="entry name" value="JAMM/MPN+_dom"/>
</dbReference>
<dbReference type="InterPro" id="IPR050242">
    <property type="entry name" value="JAMM_MPN+_peptidase_M67A"/>
</dbReference>
<dbReference type="InterPro" id="IPR037518">
    <property type="entry name" value="MPN"/>
</dbReference>
<dbReference type="InterPro" id="IPR033860">
    <property type="entry name" value="MPN_BRCC36"/>
</dbReference>
<dbReference type="PANTHER" id="PTHR10410">
    <property type="entry name" value="EUKARYOTIC TRANSLATION INITIATION FACTOR 3 -RELATED"/>
    <property type="match status" value="1"/>
</dbReference>
<dbReference type="Pfam" id="PF18110">
    <property type="entry name" value="BRCC36_C"/>
    <property type="match status" value="1"/>
</dbReference>
<dbReference type="Pfam" id="PF01398">
    <property type="entry name" value="JAB"/>
    <property type="match status" value="1"/>
</dbReference>
<dbReference type="SMART" id="SM00232">
    <property type="entry name" value="JAB_MPN"/>
    <property type="match status" value="1"/>
</dbReference>
<dbReference type="SUPFAM" id="SSF102712">
    <property type="entry name" value="JAB1/MPN domain"/>
    <property type="match status" value="1"/>
</dbReference>
<dbReference type="PROSITE" id="PS50249">
    <property type="entry name" value="MPN"/>
    <property type="match status" value="1"/>
</dbReference>
<reference key="1">
    <citation type="submission" date="2008-01" db="EMBL/GenBank/DDBJ databases">
        <title>NISC comparative sequencing initiative.</title>
        <authorList>
            <person name="Antonellis A."/>
            <person name="Ayele K."/>
            <person name="Benjamin B."/>
            <person name="Blakesley R.W."/>
            <person name="Boakye A."/>
            <person name="Bouffard G.G."/>
            <person name="Brinkley C."/>
            <person name="Brooks S."/>
            <person name="Chu G."/>
            <person name="Coleman H."/>
            <person name="Engle J."/>
            <person name="Gestole M."/>
            <person name="Greene A."/>
            <person name="Guan X."/>
            <person name="Gupta J."/>
            <person name="Haghighi P."/>
            <person name="Han J."/>
            <person name="Hansen N."/>
            <person name="Ho S.-L."/>
            <person name="Hu P."/>
            <person name="Hunter G."/>
            <person name="Hurle B."/>
            <person name="Idol J.R."/>
            <person name="Kwong P."/>
            <person name="Laric P."/>
            <person name="Larson S."/>
            <person name="Lee-Lin S.-Q."/>
            <person name="Legaspi R."/>
            <person name="Madden M."/>
            <person name="Maduro Q.L."/>
            <person name="Maduro V.B."/>
            <person name="Margulies E.H."/>
            <person name="Masiello C."/>
            <person name="Maskeri B."/>
            <person name="McDowell J."/>
            <person name="Mojidi H.A."/>
            <person name="Mullikin J.C."/>
            <person name="Oestreicher J.S."/>
            <person name="Park M."/>
            <person name="Portnoy M.E."/>
            <person name="Prasad A."/>
            <person name="Puri O."/>
            <person name="Reddix-Dugue N."/>
            <person name="Schandler K."/>
            <person name="Schueler M.G."/>
            <person name="Sison C."/>
            <person name="Stantripop S."/>
            <person name="Stephen E."/>
            <person name="Taye A."/>
            <person name="Thomas J.W."/>
            <person name="Thomas P.J."/>
            <person name="Tsipouri V."/>
            <person name="Ung L."/>
            <person name="Vogt J.L."/>
            <person name="Wetherby K.D."/>
            <person name="Young A."/>
            <person name="Green E.D."/>
        </authorList>
    </citation>
    <scope>NUCLEOTIDE SEQUENCE [LARGE SCALE GENOMIC DNA]</scope>
</reference>
<evidence type="ECO:0000250" key="1">
    <source>
        <dbReference type="UniProtKB" id="E2AXC7"/>
    </source>
</evidence>
<evidence type="ECO:0000250" key="2">
    <source>
        <dbReference type="UniProtKB" id="P46736"/>
    </source>
</evidence>
<evidence type="ECO:0000250" key="3">
    <source>
        <dbReference type="UniProtKB" id="P46737"/>
    </source>
</evidence>
<evidence type="ECO:0000255" key="4">
    <source>
        <dbReference type="PROSITE-ProRule" id="PRU01182"/>
    </source>
</evidence>
<evidence type="ECO:0000305" key="5"/>
<sequence>MAVQVVQAVQAVHLESDAFLVCLNHALSTEKEEVMGLCIGELNDDTRSDSKFAYTGTEMRTVAEKVDAVRIVHIHSVIILRRSDKRKDRVEISPEQLSAASTEAERLAELTGRPMRVVGWYHSHPHITVWPSHVDVRTQAMYQMMDQGFVGLIFSCFIEDKNTKTGRVLYTCFQSIQAQKSSESLHGPRDFWSSSKHISIEGQKEEERYERIEIPIHIVPHVTIGKVCLESAVELPKILCQEEQDAYRRIHSLTHLDSVTKIHNGSVFTKNLCSQMSAVSGPLLQWLEDRLEQNQQHLRELQQEKEELMQELSSLE</sequence>
<proteinExistence type="inferred from homology"/>